<organism>
    <name type="scientific">Staphylococcus aureus (strain Mu50 / ATCC 700699)</name>
    <dbReference type="NCBI Taxonomy" id="158878"/>
    <lineage>
        <taxon>Bacteria</taxon>
        <taxon>Bacillati</taxon>
        <taxon>Bacillota</taxon>
        <taxon>Bacilli</taxon>
        <taxon>Bacillales</taxon>
        <taxon>Staphylococcaceae</taxon>
        <taxon>Staphylococcus</taxon>
    </lineage>
</organism>
<reference key="1">
    <citation type="journal article" date="2001" name="Lancet">
        <title>Whole genome sequencing of meticillin-resistant Staphylococcus aureus.</title>
        <authorList>
            <person name="Kuroda M."/>
            <person name="Ohta T."/>
            <person name="Uchiyama I."/>
            <person name="Baba T."/>
            <person name="Yuzawa H."/>
            <person name="Kobayashi I."/>
            <person name="Cui L."/>
            <person name="Oguchi A."/>
            <person name="Aoki K."/>
            <person name="Nagai Y."/>
            <person name="Lian J.-Q."/>
            <person name="Ito T."/>
            <person name="Kanamori M."/>
            <person name="Matsumaru H."/>
            <person name="Maruyama A."/>
            <person name="Murakami H."/>
            <person name="Hosoyama A."/>
            <person name="Mizutani-Ui Y."/>
            <person name="Takahashi N.K."/>
            <person name="Sawano T."/>
            <person name="Inoue R."/>
            <person name="Kaito C."/>
            <person name="Sekimizu K."/>
            <person name="Hirakawa H."/>
            <person name="Kuhara S."/>
            <person name="Goto S."/>
            <person name="Yabuzaki J."/>
            <person name="Kanehisa M."/>
            <person name="Yamashita A."/>
            <person name="Oshima K."/>
            <person name="Furuya K."/>
            <person name="Yoshino C."/>
            <person name="Shiba T."/>
            <person name="Hattori M."/>
            <person name="Ogasawara N."/>
            <person name="Hayashi H."/>
            <person name="Hiramatsu K."/>
        </authorList>
    </citation>
    <scope>NUCLEOTIDE SEQUENCE [LARGE SCALE GENOMIC DNA]</scope>
    <source>
        <strain>Mu50 / ATCC 700699</strain>
    </source>
</reference>
<feature type="chain" id="PRO_0000162016" description="Uncharacterized RNA methyltransferase SAV1897">
    <location>
        <begin position="1"/>
        <end position="453"/>
    </location>
</feature>
<feature type="active site" description="Nucleophile" evidence="2">
    <location>
        <position position="411"/>
    </location>
</feature>
<feature type="binding site" evidence="1">
    <location>
        <position position="74"/>
    </location>
    <ligand>
        <name>[4Fe-4S] cluster</name>
        <dbReference type="ChEBI" id="CHEBI:49883"/>
    </ligand>
</feature>
<feature type="binding site" evidence="1">
    <location>
        <position position="80"/>
    </location>
    <ligand>
        <name>[4Fe-4S] cluster</name>
        <dbReference type="ChEBI" id="CHEBI:49883"/>
    </ligand>
</feature>
<feature type="binding site" evidence="1">
    <location>
        <position position="83"/>
    </location>
    <ligand>
        <name>[4Fe-4S] cluster</name>
        <dbReference type="ChEBI" id="CHEBI:49883"/>
    </ligand>
</feature>
<feature type="binding site" evidence="1">
    <location>
        <position position="162"/>
    </location>
    <ligand>
        <name>[4Fe-4S] cluster</name>
        <dbReference type="ChEBI" id="CHEBI:49883"/>
    </ligand>
</feature>
<feature type="binding site" evidence="2">
    <location>
        <position position="286"/>
    </location>
    <ligand>
        <name>S-adenosyl-L-methionine</name>
        <dbReference type="ChEBI" id="CHEBI:59789"/>
    </ligand>
</feature>
<feature type="binding site" evidence="2">
    <location>
        <position position="315"/>
    </location>
    <ligand>
        <name>S-adenosyl-L-methionine</name>
        <dbReference type="ChEBI" id="CHEBI:59789"/>
    </ligand>
</feature>
<feature type="binding site" evidence="2">
    <location>
        <position position="336"/>
    </location>
    <ligand>
        <name>S-adenosyl-L-methionine</name>
        <dbReference type="ChEBI" id="CHEBI:59789"/>
    </ligand>
</feature>
<feature type="binding site" evidence="2">
    <location>
        <position position="384"/>
    </location>
    <ligand>
        <name>S-adenosyl-L-methionine</name>
        <dbReference type="ChEBI" id="CHEBI:59789"/>
    </ligand>
</feature>
<name>Y1897_STAAM</name>
<sequence>MQAIAKNDIKTGTVVDLTHEGHGVVKIDRFPIFIPQALINEQIEYKIIKVKKNFAIGKLLNINTRSENRVAPPCIYYERCGGCQLQHLSYEAQLEMKKEQVINLFQRKAHFDNSKINDTVGMTDPWRYRNKSQIPVGKNEQNEVIMGFYRQRSHDIIDMESCLIQDSQHQEVMNEVKSILKDLNVSIYQEQLKKGLMRHLVVRTGYHTDEMMIIFVTNGKKWPQKNAVVEKILDAFPNVTSIKQNINDSHSNVIMGRQSITLYGKDTIIDQLTDSTFKISDQSFYQINSEQTEKLYNKAIEYAQLTGNEVVLDTYCGIGTIGLYMAPHAKHVYGVEVVPSSIEDAQQNATINQCNNTTFVCGKAEEVILQWKAQGIKPDVVMVDPPRKGCDETFIQTLLTLEPKRIVYISCNPATQQRDALLLAEKYQLEEVTPVDMFPQTTHVETVALFNLK</sequence>
<dbReference type="EC" id="2.1.1.-"/>
<dbReference type="EMBL" id="BA000017">
    <property type="protein sequence ID" value="BAB58059.1"/>
    <property type="molecule type" value="Genomic_DNA"/>
</dbReference>
<dbReference type="SMR" id="Q99SY9"/>
<dbReference type="KEGG" id="sav:SAV1897"/>
<dbReference type="HOGENOM" id="CLU_014689_7_0_9"/>
<dbReference type="PhylomeDB" id="Q99SY9"/>
<dbReference type="Proteomes" id="UP000002481">
    <property type="component" value="Chromosome"/>
</dbReference>
<dbReference type="GO" id="GO:0051539">
    <property type="term" value="F:4 iron, 4 sulfur cluster binding"/>
    <property type="evidence" value="ECO:0007669"/>
    <property type="project" value="UniProtKB-KW"/>
</dbReference>
<dbReference type="GO" id="GO:0046872">
    <property type="term" value="F:metal ion binding"/>
    <property type="evidence" value="ECO:0007669"/>
    <property type="project" value="UniProtKB-KW"/>
</dbReference>
<dbReference type="GO" id="GO:0070041">
    <property type="term" value="F:rRNA (uridine-C5-)-methyltransferase activity"/>
    <property type="evidence" value="ECO:0007669"/>
    <property type="project" value="TreeGrafter"/>
</dbReference>
<dbReference type="GO" id="GO:0070475">
    <property type="term" value="P:rRNA base methylation"/>
    <property type="evidence" value="ECO:0007669"/>
    <property type="project" value="TreeGrafter"/>
</dbReference>
<dbReference type="CDD" id="cd02440">
    <property type="entry name" value="AdoMet_MTases"/>
    <property type="match status" value="1"/>
</dbReference>
<dbReference type="FunFam" id="3.40.50.150:FF:000009">
    <property type="entry name" value="23S rRNA (Uracil(1939)-C(5))-methyltransferase RlmD"/>
    <property type="match status" value="1"/>
</dbReference>
<dbReference type="FunFam" id="2.40.50.140:FF:000097">
    <property type="entry name" value="23S rRNA (uracil(1939)-C(5))-methyltransferase RlmD"/>
    <property type="match status" value="1"/>
</dbReference>
<dbReference type="FunFam" id="2.40.50.1070:FF:000003">
    <property type="entry name" value="23S rRNA (Uracil-5-)-methyltransferase RumA"/>
    <property type="match status" value="1"/>
</dbReference>
<dbReference type="Gene3D" id="2.40.50.1070">
    <property type="match status" value="1"/>
</dbReference>
<dbReference type="Gene3D" id="2.40.50.140">
    <property type="entry name" value="Nucleic acid-binding proteins"/>
    <property type="match status" value="1"/>
</dbReference>
<dbReference type="Gene3D" id="3.40.50.150">
    <property type="entry name" value="Vaccinia Virus protein VP39"/>
    <property type="match status" value="1"/>
</dbReference>
<dbReference type="InterPro" id="IPR030390">
    <property type="entry name" value="MeTrfase_TrmA_AS"/>
</dbReference>
<dbReference type="InterPro" id="IPR030391">
    <property type="entry name" value="MeTrfase_TrmA_CS"/>
</dbReference>
<dbReference type="InterPro" id="IPR012340">
    <property type="entry name" value="NA-bd_OB-fold"/>
</dbReference>
<dbReference type="InterPro" id="IPR029063">
    <property type="entry name" value="SAM-dependent_MTases_sf"/>
</dbReference>
<dbReference type="InterPro" id="IPR010280">
    <property type="entry name" value="U5_MeTrfase_fam"/>
</dbReference>
<dbReference type="NCBIfam" id="TIGR00479">
    <property type="entry name" value="rumA"/>
    <property type="match status" value="1"/>
</dbReference>
<dbReference type="PANTHER" id="PTHR11061">
    <property type="entry name" value="RNA M5U METHYLTRANSFERASE"/>
    <property type="match status" value="1"/>
</dbReference>
<dbReference type="PANTHER" id="PTHR11061:SF30">
    <property type="entry name" value="TRNA (URACIL(54)-C(5))-METHYLTRANSFERASE"/>
    <property type="match status" value="1"/>
</dbReference>
<dbReference type="Pfam" id="PF05958">
    <property type="entry name" value="tRNA_U5-meth_tr"/>
    <property type="match status" value="1"/>
</dbReference>
<dbReference type="SUPFAM" id="SSF50249">
    <property type="entry name" value="Nucleic acid-binding proteins"/>
    <property type="match status" value="1"/>
</dbReference>
<dbReference type="SUPFAM" id="SSF53335">
    <property type="entry name" value="S-adenosyl-L-methionine-dependent methyltransferases"/>
    <property type="match status" value="1"/>
</dbReference>
<dbReference type="PROSITE" id="PS51687">
    <property type="entry name" value="SAM_MT_RNA_M5U"/>
    <property type="match status" value="1"/>
</dbReference>
<dbReference type="PROSITE" id="PS01230">
    <property type="entry name" value="TRMA_1"/>
    <property type="match status" value="1"/>
</dbReference>
<dbReference type="PROSITE" id="PS01231">
    <property type="entry name" value="TRMA_2"/>
    <property type="match status" value="1"/>
</dbReference>
<comment type="similarity">
    <text evidence="2">Belongs to the class I-like SAM-binding methyltransferase superfamily. RNA M5U methyltransferase family.</text>
</comment>
<gene>
    <name type="ordered locus">SAV1897</name>
</gene>
<evidence type="ECO:0000250" key="1"/>
<evidence type="ECO:0000255" key="2">
    <source>
        <dbReference type="PROSITE-ProRule" id="PRU01024"/>
    </source>
</evidence>
<proteinExistence type="inferred from homology"/>
<keyword id="KW-0004">4Fe-4S</keyword>
<keyword id="KW-0408">Iron</keyword>
<keyword id="KW-0411">Iron-sulfur</keyword>
<keyword id="KW-0479">Metal-binding</keyword>
<keyword id="KW-0489">Methyltransferase</keyword>
<keyword id="KW-0949">S-adenosyl-L-methionine</keyword>
<keyword id="KW-0808">Transferase</keyword>
<protein>
    <recommendedName>
        <fullName>Uncharacterized RNA methyltransferase SAV1897</fullName>
        <ecNumber>2.1.1.-</ecNumber>
    </recommendedName>
</protein>
<accession>Q99SY9</accession>